<comment type="function">
    <text evidence="1">Produces ATP from ADP in the presence of a proton gradient across the membrane. The gamma chain is believed to be important in regulating ATPase activity and the flow of protons through the CF(0) complex.</text>
</comment>
<comment type="subunit">
    <text evidence="1">F-type ATPases have 2 components, CF(1) - the catalytic core - and CF(0) - the membrane proton channel. CF(1) has five subunits: alpha(3), beta(3), gamma(1), delta(1), epsilon(1). CF(0) has three main subunits: a, b and c.</text>
</comment>
<comment type="subcellular location">
    <subcellularLocation>
        <location evidence="1">Cell inner membrane</location>
        <topology evidence="1">Peripheral membrane protein</topology>
    </subcellularLocation>
</comment>
<comment type="similarity">
    <text evidence="1">Belongs to the ATPase gamma chain family.</text>
</comment>
<protein>
    <recommendedName>
        <fullName evidence="1">ATP synthase gamma chain</fullName>
    </recommendedName>
    <alternativeName>
        <fullName evidence="1">ATP synthase F1 sector gamma subunit</fullName>
    </alternativeName>
    <alternativeName>
        <fullName evidence="1">F-ATPase gamma subunit</fullName>
    </alternativeName>
</protein>
<gene>
    <name evidence="1" type="primary">atpG</name>
    <name type="ordered locus">Caul_4738</name>
</gene>
<reference key="1">
    <citation type="submission" date="2008-01" db="EMBL/GenBank/DDBJ databases">
        <title>Complete sequence of chromosome of Caulobacter sp. K31.</title>
        <authorList>
            <consortium name="US DOE Joint Genome Institute"/>
            <person name="Copeland A."/>
            <person name="Lucas S."/>
            <person name="Lapidus A."/>
            <person name="Barry K."/>
            <person name="Glavina del Rio T."/>
            <person name="Dalin E."/>
            <person name="Tice H."/>
            <person name="Pitluck S."/>
            <person name="Bruce D."/>
            <person name="Goodwin L."/>
            <person name="Thompson L.S."/>
            <person name="Brettin T."/>
            <person name="Detter J.C."/>
            <person name="Han C."/>
            <person name="Schmutz J."/>
            <person name="Larimer F."/>
            <person name="Land M."/>
            <person name="Hauser L."/>
            <person name="Kyrpides N."/>
            <person name="Kim E."/>
            <person name="Stephens C."/>
            <person name="Richardson P."/>
        </authorList>
    </citation>
    <scope>NUCLEOTIDE SEQUENCE [LARGE SCALE GENOMIC DNA]</scope>
    <source>
        <strain>K31</strain>
    </source>
</reference>
<name>ATPG_CAUSK</name>
<keyword id="KW-0066">ATP synthesis</keyword>
<keyword id="KW-0997">Cell inner membrane</keyword>
<keyword id="KW-1003">Cell membrane</keyword>
<keyword id="KW-0139">CF(1)</keyword>
<keyword id="KW-0375">Hydrogen ion transport</keyword>
<keyword id="KW-0406">Ion transport</keyword>
<keyword id="KW-0472">Membrane</keyword>
<keyword id="KW-0813">Transport</keyword>
<dbReference type="EMBL" id="CP000927">
    <property type="protein sequence ID" value="ABZ73858.1"/>
    <property type="molecule type" value="Genomic_DNA"/>
</dbReference>
<dbReference type="SMR" id="B0T336"/>
<dbReference type="STRING" id="366602.Caul_4738"/>
<dbReference type="KEGG" id="cak:Caul_4738"/>
<dbReference type="eggNOG" id="COG0224">
    <property type="taxonomic scope" value="Bacteria"/>
</dbReference>
<dbReference type="HOGENOM" id="CLU_050669_0_1_5"/>
<dbReference type="OrthoDB" id="9812769at2"/>
<dbReference type="GO" id="GO:0005886">
    <property type="term" value="C:plasma membrane"/>
    <property type="evidence" value="ECO:0007669"/>
    <property type="project" value="UniProtKB-SubCell"/>
</dbReference>
<dbReference type="GO" id="GO:0045259">
    <property type="term" value="C:proton-transporting ATP synthase complex"/>
    <property type="evidence" value="ECO:0007669"/>
    <property type="project" value="UniProtKB-KW"/>
</dbReference>
<dbReference type="GO" id="GO:0005524">
    <property type="term" value="F:ATP binding"/>
    <property type="evidence" value="ECO:0007669"/>
    <property type="project" value="UniProtKB-UniRule"/>
</dbReference>
<dbReference type="GO" id="GO:0046933">
    <property type="term" value="F:proton-transporting ATP synthase activity, rotational mechanism"/>
    <property type="evidence" value="ECO:0007669"/>
    <property type="project" value="UniProtKB-UniRule"/>
</dbReference>
<dbReference type="GO" id="GO:0042777">
    <property type="term" value="P:proton motive force-driven plasma membrane ATP synthesis"/>
    <property type="evidence" value="ECO:0007669"/>
    <property type="project" value="UniProtKB-UniRule"/>
</dbReference>
<dbReference type="CDD" id="cd12151">
    <property type="entry name" value="F1-ATPase_gamma"/>
    <property type="match status" value="1"/>
</dbReference>
<dbReference type="FunFam" id="1.10.287.80:FF:000001">
    <property type="entry name" value="ATP synthase gamma chain"/>
    <property type="match status" value="1"/>
</dbReference>
<dbReference type="FunFam" id="1.10.287.80:FF:000003">
    <property type="entry name" value="ATP synthase gamma chain, chloroplastic"/>
    <property type="match status" value="1"/>
</dbReference>
<dbReference type="Gene3D" id="3.40.1380.10">
    <property type="match status" value="1"/>
</dbReference>
<dbReference type="Gene3D" id="1.10.287.80">
    <property type="entry name" value="ATP synthase, gamma subunit, helix hairpin domain"/>
    <property type="match status" value="1"/>
</dbReference>
<dbReference type="HAMAP" id="MF_00815">
    <property type="entry name" value="ATP_synth_gamma_bact"/>
    <property type="match status" value="1"/>
</dbReference>
<dbReference type="InterPro" id="IPR035968">
    <property type="entry name" value="ATP_synth_F1_ATPase_gsu"/>
</dbReference>
<dbReference type="InterPro" id="IPR000131">
    <property type="entry name" value="ATP_synth_F1_gsu"/>
</dbReference>
<dbReference type="InterPro" id="IPR023632">
    <property type="entry name" value="ATP_synth_F1_gsu_CS"/>
</dbReference>
<dbReference type="NCBIfam" id="TIGR01146">
    <property type="entry name" value="ATPsyn_F1gamma"/>
    <property type="match status" value="1"/>
</dbReference>
<dbReference type="NCBIfam" id="NF004146">
    <property type="entry name" value="PRK05621.1-4"/>
    <property type="match status" value="1"/>
</dbReference>
<dbReference type="PANTHER" id="PTHR11693">
    <property type="entry name" value="ATP SYNTHASE GAMMA CHAIN"/>
    <property type="match status" value="1"/>
</dbReference>
<dbReference type="PANTHER" id="PTHR11693:SF22">
    <property type="entry name" value="ATP SYNTHASE SUBUNIT GAMMA, MITOCHONDRIAL"/>
    <property type="match status" value="1"/>
</dbReference>
<dbReference type="Pfam" id="PF00231">
    <property type="entry name" value="ATP-synt"/>
    <property type="match status" value="1"/>
</dbReference>
<dbReference type="PIRSF" id="PIRSF039089">
    <property type="entry name" value="ATP_synthase_gamma"/>
    <property type="match status" value="1"/>
</dbReference>
<dbReference type="PRINTS" id="PR00126">
    <property type="entry name" value="ATPASEGAMMA"/>
</dbReference>
<dbReference type="SUPFAM" id="SSF52943">
    <property type="entry name" value="ATP synthase (F1-ATPase), gamma subunit"/>
    <property type="match status" value="1"/>
</dbReference>
<dbReference type="PROSITE" id="PS00153">
    <property type="entry name" value="ATPASE_GAMMA"/>
    <property type="match status" value="1"/>
</dbReference>
<feature type="chain" id="PRO_1000083776" description="ATP synthase gamma chain">
    <location>
        <begin position="1"/>
        <end position="294"/>
    </location>
</feature>
<evidence type="ECO:0000255" key="1">
    <source>
        <dbReference type="HAMAP-Rule" id="MF_00815"/>
    </source>
</evidence>
<sequence length="294" mass="31868">MASLKEMRNRIASVKATQKITKAMQMVAAAKLRRSQDAAEAARPYARRLAAVIANLAAGVTGDGAPPMLAGTGRDDRHLIIVAAADRGLAGGFTSSIVRAARERIETLIAQGKDVKIVCIGKKSTAQLRRLYSDRIVEDFDLSAYRQFTLTVAQPIADVVTRLYEAGDVDVVTLFYSRFKSVVIQTPTALQLIPATVDGANAPAAAQGAQAVYEYEPSEEEILETLLPRNLTVQILSALLDNMAGFYASQMTAMDNATRNAGDMIKRYTLEYNRSRQAQITKELIEIISGAEAV</sequence>
<proteinExistence type="inferred from homology"/>
<organism>
    <name type="scientific">Caulobacter sp. (strain K31)</name>
    <dbReference type="NCBI Taxonomy" id="366602"/>
    <lineage>
        <taxon>Bacteria</taxon>
        <taxon>Pseudomonadati</taxon>
        <taxon>Pseudomonadota</taxon>
        <taxon>Alphaproteobacteria</taxon>
        <taxon>Caulobacterales</taxon>
        <taxon>Caulobacteraceae</taxon>
        <taxon>Caulobacter</taxon>
    </lineage>
</organism>
<accession>B0T336</accession>